<keyword id="KW-0066">ATP synthesis</keyword>
<keyword id="KW-0997">Cell inner membrane</keyword>
<keyword id="KW-1003">Cell membrane</keyword>
<keyword id="KW-0138">CF(0)</keyword>
<keyword id="KW-0375">Hydrogen ion transport</keyword>
<keyword id="KW-0406">Ion transport</keyword>
<keyword id="KW-0472">Membrane</keyword>
<keyword id="KW-0812">Transmembrane</keyword>
<keyword id="KW-1133">Transmembrane helix</keyword>
<keyword id="KW-0813">Transport</keyword>
<comment type="function">
    <text evidence="1">F(1)F(0) ATP synthase produces ATP from ADP in the presence of a proton or sodium gradient. F-type ATPases consist of two structural domains, F(1) containing the extramembraneous catalytic core and F(0) containing the membrane proton channel, linked together by a central stalk and a peripheral stalk. During catalysis, ATP synthesis in the catalytic domain of F(1) is coupled via a rotary mechanism of the central stalk subunits to proton translocation.</text>
</comment>
<comment type="function">
    <text evidence="1">Component of the F(0) channel, it forms part of the peripheral stalk, linking F(1) to F(0).</text>
</comment>
<comment type="subunit">
    <text evidence="1">F-type ATPases have 2 components, F(1) - the catalytic core - and F(0) - the membrane proton channel. F(1) has five subunits: alpha(3), beta(3), gamma(1), delta(1), epsilon(1). F(0) has three main subunits: a(1), b(2) and c(10-14). The alpha and beta chains form an alternating ring which encloses part of the gamma chain. F(1) is attached to F(0) by a central stalk formed by the gamma and epsilon chains, while a peripheral stalk is formed by the delta and b chains.</text>
</comment>
<comment type="subcellular location">
    <subcellularLocation>
        <location evidence="1">Cell inner membrane</location>
        <topology evidence="1">Single-pass membrane protein</topology>
    </subcellularLocation>
</comment>
<comment type="similarity">
    <text evidence="1">Belongs to the ATPase B chain family.</text>
</comment>
<name>ATPF_ACTPJ</name>
<reference key="1">
    <citation type="journal article" date="2008" name="PLoS ONE">
        <title>Genome biology of Actinobacillus pleuropneumoniae JL03, an isolate of serotype 3 prevalent in China.</title>
        <authorList>
            <person name="Xu Z."/>
            <person name="Zhou Y."/>
            <person name="Li L."/>
            <person name="Zhou R."/>
            <person name="Xiao S."/>
            <person name="Wan Y."/>
            <person name="Zhang S."/>
            <person name="Wang K."/>
            <person name="Li W."/>
            <person name="Li L."/>
            <person name="Jin H."/>
            <person name="Kang M."/>
            <person name="Dalai B."/>
            <person name="Li T."/>
            <person name="Liu L."/>
            <person name="Cheng Y."/>
            <person name="Zhang L."/>
            <person name="Xu T."/>
            <person name="Zheng H."/>
            <person name="Pu S."/>
            <person name="Wang B."/>
            <person name="Gu W."/>
            <person name="Zhang X.L."/>
            <person name="Zhu G.-F."/>
            <person name="Wang S."/>
            <person name="Zhao G.-P."/>
            <person name="Chen H."/>
        </authorList>
    </citation>
    <scope>NUCLEOTIDE SEQUENCE [LARGE SCALE GENOMIC DNA]</scope>
    <source>
        <strain>JL03</strain>
    </source>
</reference>
<accession>B0BRX6</accession>
<proteinExistence type="inferred from homology"/>
<gene>
    <name evidence="1" type="primary">atpF</name>
    <name type="ordered locus">APJL_1683</name>
</gene>
<protein>
    <recommendedName>
        <fullName evidence="1">ATP synthase subunit b</fullName>
    </recommendedName>
    <alternativeName>
        <fullName evidence="1">ATP synthase F(0) sector subunit b</fullName>
    </alternativeName>
    <alternativeName>
        <fullName evidence="1">ATPase subunit I</fullName>
    </alternativeName>
    <alternativeName>
        <fullName evidence="1">F-type ATPase subunit b</fullName>
        <shortName evidence="1">F-ATPase subunit b</shortName>
    </alternativeName>
</protein>
<dbReference type="EMBL" id="CP000687">
    <property type="protein sequence ID" value="ABY70235.1"/>
    <property type="molecule type" value="Genomic_DNA"/>
</dbReference>
<dbReference type="RefSeq" id="WP_005599069.1">
    <property type="nucleotide sequence ID" value="NC_010278.1"/>
</dbReference>
<dbReference type="SMR" id="B0BRX6"/>
<dbReference type="GeneID" id="48599940"/>
<dbReference type="KEGG" id="apj:APJL_1683"/>
<dbReference type="HOGENOM" id="CLU_079215_4_5_6"/>
<dbReference type="Proteomes" id="UP000008547">
    <property type="component" value="Chromosome"/>
</dbReference>
<dbReference type="GO" id="GO:0005886">
    <property type="term" value="C:plasma membrane"/>
    <property type="evidence" value="ECO:0007669"/>
    <property type="project" value="UniProtKB-SubCell"/>
</dbReference>
<dbReference type="GO" id="GO:0045259">
    <property type="term" value="C:proton-transporting ATP synthase complex"/>
    <property type="evidence" value="ECO:0007669"/>
    <property type="project" value="UniProtKB-KW"/>
</dbReference>
<dbReference type="GO" id="GO:0046933">
    <property type="term" value="F:proton-transporting ATP synthase activity, rotational mechanism"/>
    <property type="evidence" value="ECO:0007669"/>
    <property type="project" value="UniProtKB-UniRule"/>
</dbReference>
<dbReference type="GO" id="GO:0046961">
    <property type="term" value="F:proton-transporting ATPase activity, rotational mechanism"/>
    <property type="evidence" value="ECO:0007669"/>
    <property type="project" value="TreeGrafter"/>
</dbReference>
<dbReference type="CDD" id="cd06503">
    <property type="entry name" value="ATP-synt_Fo_b"/>
    <property type="match status" value="1"/>
</dbReference>
<dbReference type="FunFam" id="1.20.5.620:FF:000001">
    <property type="entry name" value="ATP synthase subunit b"/>
    <property type="match status" value="1"/>
</dbReference>
<dbReference type="Gene3D" id="1.20.5.620">
    <property type="entry name" value="F1F0 ATP synthase subunit B, membrane domain"/>
    <property type="match status" value="1"/>
</dbReference>
<dbReference type="HAMAP" id="MF_01398">
    <property type="entry name" value="ATP_synth_b_bprime"/>
    <property type="match status" value="1"/>
</dbReference>
<dbReference type="InterPro" id="IPR028987">
    <property type="entry name" value="ATP_synth_B-like_membr_sf"/>
</dbReference>
<dbReference type="InterPro" id="IPR002146">
    <property type="entry name" value="ATP_synth_b/b'su_bac/chlpt"/>
</dbReference>
<dbReference type="InterPro" id="IPR005864">
    <property type="entry name" value="ATP_synth_F0_bsu_bac"/>
</dbReference>
<dbReference type="InterPro" id="IPR050059">
    <property type="entry name" value="ATP_synthase_B_chain"/>
</dbReference>
<dbReference type="NCBIfam" id="TIGR01144">
    <property type="entry name" value="ATP_synt_b"/>
    <property type="match status" value="1"/>
</dbReference>
<dbReference type="NCBIfam" id="NF004411">
    <property type="entry name" value="PRK05759.1-2"/>
    <property type="match status" value="1"/>
</dbReference>
<dbReference type="NCBIfam" id="NF004413">
    <property type="entry name" value="PRK05759.1-4"/>
    <property type="match status" value="1"/>
</dbReference>
<dbReference type="PANTHER" id="PTHR33445:SF1">
    <property type="entry name" value="ATP SYNTHASE SUBUNIT B"/>
    <property type="match status" value="1"/>
</dbReference>
<dbReference type="PANTHER" id="PTHR33445">
    <property type="entry name" value="ATP SYNTHASE SUBUNIT B', CHLOROPLASTIC"/>
    <property type="match status" value="1"/>
</dbReference>
<dbReference type="Pfam" id="PF00430">
    <property type="entry name" value="ATP-synt_B"/>
    <property type="match status" value="1"/>
</dbReference>
<dbReference type="SUPFAM" id="SSF81573">
    <property type="entry name" value="F1F0 ATP synthase subunit B, membrane domain"/>
    <property type="match status" value="1"/>
</dbReference>
<organism>
    <name type="scientific">Actinobacillus pleuropneumoniae serotype 3 (strain JL03)</name>
    <dbReference type="NCBI Taxonomy" id="434271"/>
    <lineage>
        <taxon>Bacteria</taxon>
        <taxon>Pseudomonadati</taxon>
        <taxon>Pseudomonadota</taxon>
        <taxon>Gammaproteobacteria</taxon>
        <taxon>Pasteurellales</taxon>
        <taxon>Pasteurellaceae</taxon>
        <taxon>Actinobacillus</taxon>
    </lineage>
</organism>
<evidence type="ECO:0000255" key="1">
    <source>
        <dbReference type="HAMAP-Rule" id="MF_01398"/>
    </source>
</evidence>
<feature type="chain" id="PRO_0000368295" description="ATP synthase subunit b">
    <location>
        <begin position="1"/>
        <end position="156"/>
    </location>
</feature>
<feature type="transmembrane region" description="Helical" evidence="1">
    <location>
        <begin position="7"/>
        <end position="27"/>
    </location>
</feature>
<sequence>MNLNATLIGQLIAFALFVAFCMKFVWPPLIKAIEERQANIANALASAEKAKQEQADSKAAADQEILKAKEEAQKIIDLATKRRNEILESVQAEAEIERQRIIEQGHAEVESERKRVQEELRQKVAALAVAGAEKIVGRSVDQAANNDIIDKLVAEL</sequence>